<protein>
    <recommendedName>
        <fullName evidence="3">Major capsid protein</fullName>
        <shortName evidence="3">MCP</shortName>
    </recommendedName>
    <alternativeName>
        <fullName evidence="2">Gene product 32</fullName>
        <shortName evidence="2">gp32</shortName>
    </alternativeName>
</protein>
<accession>A0A385DVU6</accession>
<feature type="chain" id="PRO_0000458026" description="Major capsid protein">
    <location>
        <begin position="1"/>
        <end position="504"/>
    </location>
</feature>
<feature type="strand" evidence="6">
    <location>
        <begin position="6"/>
        <end position="8"/>
    </location>
</feature>
<feature type="helix" evidence="6">
    <location>
        <begin position="22"/>
        <end position="27"/>
    </location>
</feature>
<feature type="strand" evidence="6">
    <location>
        <begin position="36"/>
        <end position="39"/>
    </location>
</feature>
<feature type="helix" evidence="6">
    <location>
        <begin position="44"/>
        <end position="47"/>
    </location>
</feature>
<feature type="helix" evidence="6">
    <location>
        <begin position="50"/>
        <end position="57"/>
    </location>
</feature>
<feature type="strand" evidence="6">
    <location>
        <begin position="61"/>
        <end position="66"/>
    </location>
</feature>
<feature type="strand" evidence="6">
    <location>
        <begin position="70"/>
        <end position="74"/>
    </location>
</feature>
<feature type="strand" evidence="6">
    <location>
        <begin position="86"/>
        <end position="88"/>
    </location>
</feature>
<feature type="strand" evidence="7">
    <location>
        <begin position="102"/>
        <end position="106"/>
    </location>
</feature>
<feature type="strand" evidence="6">
    <location>
        <begin position="109"/>
        <end position="115"/>
    </location>
</feature>
<feature type="strand" evidence="6">
    <location>
        <begin position="123"/>
        <end position="125"/>
    </location>
</feature>
<feature type="turn" evidence="6">
    <location>
        <begin position="129"/>
        <end position="131"/>
    </location>
</feature>
<feature type="strand" evidence="6">
    <location>
        <begin position="132"/>
        <end position="136"/>
    </location>
</feature>
<feature type="strand" evidence="6">
    <location>
        <begin position="141"/>
        <end position="143"/>
    </location>
</feature>
<feature type="strand" evidence="6">
    <location>
        <begin position="146"/>
        <end position="153"/>
    </location>
</feature>
<feature type="helix" evidence="6">
    <location>
        <begin position="163"/>
        <end position="166"/>
    </location>
</feature>
<feature type="strand" evidence="6">
    <location>
        <begin position="172"/>
        <end position="176"/>
    </location>
</feature>
<feature type="strand" evidence="6">
    <location>
        <begin position="181"/>
        <end position="183"/>
    </location>
</feature>
<feature type="strand" evidence="6">
    <location>
        <begin position="196"/>
        <end position="200"/>
    </location>
</feature>
<feature type="strand" evidence="6">
    <location>
        <begin position="203"/>
        <end position="212"/>
    </location>
</feature>
<feature type="helix" evidence="6">
    <location>
        <begin position="213"/>
        <end position="215"/>
    </location>
</feature>
<feature type="strand" evidence="6">
    <location>
        <begin position="219"/>
        <end position="229"/>
    </location>
</feature>
<feature type="strand" evidence="6">
    <location>
        <begin position="235"/>
        <end position="243"/>
    </location>
</feature>
<feature type="helix" evidence="6">
    <location>
        <begin position="244"/>
        <end position="265"/>
    </location>
</feature>
<feature type="strand" evidence="7">
    <location>
        <begin position="272"/>
        <end position="274"/>
    </location>
</feature>
<feature type="strand" evidence="6">
    <location>
        <begin position="281"/>
        <end position="284"/>
    </location>
</feature>
<feature type="helix" evidence="6">
    <location>
        <begin position="292"/>
        <end position="295"/>
    </location>
</feature>
<feature type="strand" evidence="6">
    <location>
        <begin position="296"/>
        <end position="299"/>
    </location>
</feature>
<feature type="strand" evidence="6">
    <location>
        <begin position="302"/>
        <end position="306"/>
    </location>
</feature>
<feature type="helix" evidence="6">
    <location>
        <begin position="309"/>
        <end position="319"/>
    </location>
</feature>
<feature type="strand" evidence="6">
    <location>
        <begin position="320"/>
        <end position="323"/>
    </location>
</feature>
<feature type="strand" evidence="6">
    <location>
        <begin position="330"/>
        <end position="335"/>
    </location>
</feature>
<feature type="helix" evidence="6">
    <location>
        <begin position="338"/>
        <end position="347"/>
    </location>
</feature>
<feature type="strand" evidence="6">
    <location>
        <begin position="348"/>
        <end position="352"/>
    </location>
</feature>
<feature type="strand" evidence="6">
    <location>
        <begin position="355"/>
        <end position="357"/>
    </location>
</feature>
<feature type="helix" evidence="6">
    <location>
        <begin position="361"/>
        <end position="364"/>
    </location>
</feature>
<feature type="strand" evidence="6">
    <location>
        <begin position="366"/>
        <end position="369"/>
    </location>
</feature>
<feature type="strand" evidence="6">
    <location>
        <begin position="376"/>
        <end position="381"/>
    </location>
</feature>
<feature type="strand" evidence="6">
    <location>
        <begin position="387"/>
        <end position="389"/>
    </location>
</feature>
<feature type="strand" evidence="6">
    <location>
        <begin position="398"/>
        <end position="400"/>
    </location>
</feature>
<feature type="helix" evidence="6">
    <location>
        <begin position="403"/>
        <end position="405"/>
    </location>
</feature>
<feature type="turn" evidence="6">
    <location>
        <begin position="407"/>
        <end position="409"/>
    </location>
</feature>
<feature type="strand" evidence="6">
    <location>
        <begin position="417"/>
        <end position="419"/>
    </location>
</feature>
<feature type="helix" evidence="6">
    <location>
        <begin position="420"/>
        <end position="422"/>
    </location>
</feature>
<feature type="strand" evidence="6">
    <location>
        <begin position="425"/>
        <end position="430"/>
    </location>
</feature>
<feature type="strand" evidence="6">
    <location>
        <begin position="437"/>
        <end position="443"/>
    </location>
</feature>
<feature type="strand" evidence="6">
    <location>
        <begin position="450"/>
        <end position="458"/>
    </location>
</feature>
<feature type="turn" evidence="6">
    <location>
        <begin position="459"/>
        <end position="462"/>
    </location>
</feature>
<feature type="strand" evidence="6">
    <location>
        <begin position="463"/>
        <end position="465"/>
    </location>
</feature>
<feature type="strand" evidence="6">
    <location>
        <begin position="472"/>
        <end position="489"/>
    </location>
</feature>
<feature type="strand" evidence="6">
    <location>
        <begin position="493"/>
        <end position="499"/>
    </location>
</feature>
<feature type="helix" evidence="6">
    <location>
        <begin position="500"/>
        <end position="502"/>
    </location>
</feature>
<keyword id="KW-0002">3D-structure</keyword>
<keyword id="KW-0167">Capsid protein</keyword>
<keyword id="KW-1185">Reference proteome</keyword>
<keyword id="KW-0946">Virion</keyword>
<evidence type="ECO:0000269" key="1">
    <source>
    </source>
</evidence>
<evidence type="ECO:0000303" key="2">
    <source>
    </source>
</evidence>
<evidence type="ECO:0000303" key="3">
    <source>
    </source>
</evidence>
<evidence type="ECO:0000305" key="4">
    <source>
    </source>
</evidence>
<evidence type="ECO:0000312" key="5">
    <source>
        <dbReference type="EMBL" id="AXQ62675.1"/>
    </source>
</evidence>
<evidence type="ECO:0007829" key="6">
    <source>
        <dbReference type="PDB" id="7QOF"/>
    </source>
</evidence>
<evidence type="ECO:0007829" key="7">
    <source>
        <dbReference type="PDB" id="7QOH"/>
    </source>
</evidence>
<name>CAPSD_BPCA1</name>
<sequence>MAGKLGKFQMLGFQHWKGLTSDNHLGAIFQQAPQKATNLMVQLLAFYRGKSLDTFLNSFPTREFEDDNEYYWDVIGSSRRNIPLVEARDENGVVVAANAANVGVGTSPFYLVFPEDWFADGEVIVGNLNQVYPFRILGDARMEGTNAVYKVELMGGNTQGVPAERLQQGERFSIEFAPVEKELSRKVGDVRFTSPVSMRNEWTTIRIQHKVAGNKLNKKLAMGIPMVRNLESGKQVKDTANMWMHYVDWEVELQFDEYKNNAMAWGTSNRNLNGEYMNFGKSGNAIKTGAGIFEQTEVANTMYYNTFSLKLLEDALYELSASKLAMDDRLFVIKTGERGAIQFHKEVLKTVSGWTTFVLDNNSTRVVEKVQSRLHSNALSAGFQFVEYKAPNGVRVRLDVDPFYDDPVRNKILHPMGGVAFSYRYDIWYIGTMDQPNIFKCKIKGDNEYRGYQWGIRNPFTGQKGNPYMSFDEDSAVIHRMATLGVCVLDPTRTMSLIPAILQG</sequence>
<dbReference type="EMBL" id="MH675552">
    <property type="protein sequence ID" value="AXQ62675.1"/>
    <property type="molecule type" value="Genomic_DNA"/>
</dbReference>
<dbReference type="PDB" id="7QOF">
    <property type="method" value="EM"/>
    <property type="resolution" value="3.01 A"/>
    <property type="chains" value="A/B/C/D/E/F/G/H/I=1-504"/>
</dbReference>
<dbReference type="PDB" id="7QOH">
    <property type="method" value="EM"/>
    <property type="resolution" value="3.32 A"/>
    <property type="chains" value="A/B/C/D/E/F=1-504"/>
</dbReference>
<dbReference type="PDB" id="7QOI">
    <property type="method" value="EM"/>
    <property type="resolution" value="3.62 A"/>
    <property type="chains" value="AA/AB/AC/AD/AE/AF/BA/BB/BC/BD/BE/BF/CA/CB/CC/CD/CE/CF/DA/DB/DC/DD/DE/DF/EA/EB/EC/ED/EE/EF=1-504"/>
</dbReference>
<dbReference type="PDB" id="8CKB">
    <property type="method" value="EM"/>
    <property type="resolution" value="4.39 A"/>
    <property type="chains" value="E001/E002/E003/E004/E005/E006/E007/E008/E009/E010/E011/E012/E013/E014/E015/E016/E017/E018/E019/E020/E021/E022/E023/E024/E025/E026/E027/E028/E029/E030=1-504"/>
</dbReference>
<dbReference type="PDBsum" id="7QOF"/>
<dbReference type="PDBsum" id="7QOH"/>
<dbReference type="PDBsum" id="7QOI"/>
<dbReference type="PDBsum" id="8CKB"/>
<dbReference type="EMDB" id="EMD-14088"/>
<dbReference type="EMDB" id="EMD-14090"/>
<dbReference type="EMDB" id="EMD-14091"/>
<dbReference type="SMR" id="A0A385DVU6"/>
<dbReference type="Proteomes" id="UP000262320">
    <property type="component" value="Genome"/>
</dbReference>
<dbReference type="GO" id="GO:0019028">
    <property type="term" value="C:viral capsid"/>
    <property type="evidence" value="ECO:0007669"/>
    <property type="project" value="UniProtKB-KW"/>
</dbReference>
<dbReference type="InterPro" id="IPR056401">
    <property type="entry name" value="Crass_capsid"/>
</dbReference>
<dbReference type="Pfam" id="PF23898">
    <property type="entry name" value="Crass_capsid"/>
    <property type="match status" value="1"/>
</dbReference>
<organismHost>
    <name type="scientific">Bacteroides intestinalis</name>
    <dbReference type="NCBI Taxonomy" id="329854"/>
</organismHost>
<organism>
    <name type="scientific">Bacteroides phage crAss001</name>
    <name type="common">Bacteroides phage PhiCrAss001</name>
    <dbReference type="NCBI Taxonomy" id="2301731"/>
    <lineage>
        <taxon>Viruses</taxon>
        <taxon>Duplodnaviria</taxon>
        <taxon>Heunggongvirae</taxon>
        <taxon>Uroviricota</taxon>
        <taxon>Caudoviricetes</taxon>
        <taxon>Crassvirales</taxon>
        <taxon>Steigviridae</taxon>
        <taxon>Asinivirinae</taxon>
        <taxon>Kehishuvirus</taxon>
        <taxon>Kehishuvirus primarius</taxon>
    </lineage>
</organism>
<comment type="function">
    <text evidence="1">Capsid protein self-assembles to form an icosahedral capsid, with a T=9 symmetry, about 77 nm in diameter. Each asymmetric capsid nonamer is covered by 9 capsid auxiliary protein, 1 copy of the trimeric head fiber protein and 2 copies of the dimeric head fiber protein.</text>
</comment>
<comment type="subunit">
    <text evidence="1">Interacts with the auxiliary capsid protein (via FD region) (PubMed:37138077). Interacts with the head fiber dimeric protein (PubMed:37138077). Interacts with the head fiber trimeric protein (PubMed:37138077). Interacts with the portal vertex auxiliary protein (PubMed:37138077).</text>
</comment>
<comment type="subcellular location">
    <subcellularLocation>
        <location evidence="1">Virion</location>
    </subcellularLocation>
    <text evidence="1">Present in 535 copies in the virion.</text>
</comment>
<comment type="miscellaneous">
    <text evidence="4">Displays an HK-97-like fold with an insertion domain that protrudes at the capsid surface.</text>
</comment>
<gene>
    <name evidence="5" type="ORF">crAss001_32</name>
</gene>
<reference key="1">
    <citation type="journal article" date="2018" name="Nat. Commun.">
        <title>PhiCrAss001 represents the most abundant bacteriophage family in the human gut and infects Bacteroides intestinalis.</title>
        <authorList>
            <person name="Shkoporov A.N."/>
            <person name="Khokhlova E.V."/>
            <person name="Fitzgerald C.B."/>
            <person name="Stockdale S.R."/>
            <person name="Draper L.A."/>
            <person name="Ross R.P."/>
            <person name="Hill C."/>
        </authorList>
    </citation>
    <scope>NUCLEOTIDE SEQUENCE [LARGE SCALE GENOMIC DNA]</scope>
</reference>
<reference key="2">
    <citation type="journal article" date="2023" name="Nature">
        <title>Structural atlas of a human gut crassvirus.</title>
        <authorList>
            <person name="Bayfield O.W."/>
            <person name="Shkoporov A.N."/>
            <person name="Yutin N."/>
            <person name="Khokhlova E.V."/>
            <person name="Smith J.L.R."/>
            <person name="Hawkins D.E.D.P."/>
            <person name="Koonin E.V."/>
            <person name="Hill C."/>
            <person name="Antson A.A."/>
        </authorList>
    </citation>
    <scope>SUBCELLULAR LOCATION</scope>
    <scope>FUNCTION</scope>
    <scope>INTERACTION WITH THE AUXILIARY CAPSID PROTEIN</scope>
    <scope>INTERACTION WITH THE HEAD FIBER TRIMERIC PROTEIN</scope>
    <scope>INTERACTION WITH THE HEAD FIBER DIMERIC PROTEIN</scope>
    <scope>INTERACTION WITH THE PORTAL VERTEX AUXILIARY PROTEIN</scope>
</reference>
<proteinExistence type="evidence at protein level"/>